<reference key="1">
    <citation type="journal article" date="2001" name="Virology">
        <title>Sequences and replication of genomes of the archaeal rudiviruses SIRV1 and SIRV2: relationships to the archaeal lipothrixvirus SIFV and some eukaryal viruses.</title>
        <authorList>
            <person name="Peng X."/>
            <person name="Blum H."/>
            <person name="She Q."/>
            <person name="Mallok S."/>
            <person name="Bruegger K."/>
            <person name="Garrett R.A."/>
            <person name="Zillig W."/>
            <person name="Prangishvili D."/>
        </authorList>
    </citation>
    <scope>NUCLEOTIDE SEQUENCE [LARGE SCALE GENOMIC DNA]</scope>
    <source>
        <strain>Isolate variant VIII</strain>
    </source>
</reference>
<dbReference type="EMBL" id="AJ414696">
    <property type="protein sequence ID" value="CAC93964.1"/>
    <property type="molecule type" value="Genomic_DNA"/>
</dbReference>
<dbReference type="RefSeq" id="NP_666597.1">
    <property type="nucleotide sequence ID" value="NC_004087.1"/>
</dbReference>
<dbReference type="SMR" id="Q8QL45"/>
<dbReference type="KEGG" id="vg:951401"/>
<dbReference type="OrthoDB" id="17301at10239"/>
<dbReference type="Proteomes" id="UP000002270">
    <property type="component" value="Genome"/>
</dbReference>
<dbReference type="GO" id="GO:0033644">
    <property type="term" value="C:host cell membrane"/>
    <property type="evidence" value="ECO:0007669"/>
    <property type="project" value="UniProtKB-SubCell"/>
</dbReference>
<dbReference type="GO" id="GO:0016020">
    <property type="term" value="C:membrane"/>
    <property type="evidence" value="ECO:0007669"/>
    <property type="project" value="UniProtKB-KW"/>
</dbReference>
<dbReference type="Gene3D" id="3.30.70.1910">
    <property type="match status" value="1"/>
</dbReference>
<dbReference type="InterPro" id="IPR049137">
    <property type="entry name" value="ORF117-like_Rudivir"/>
</dbReference>
<dbReference type="InterPro" id="IPR056906">
    <property type="entry name" value="ORF2/G2P_dom"/>
</dbReference>
<dbReference type="Pfam" id="PF21578">
    <property type="entry name" value="117-like_vir"/>
    <property type="match status" value="1"/>
</dbReference>
<dbReference type="Pfam" id="PF23343">
    <property type="entry name" value="REP_ORF2-G2P"/>
    <property type="match status" value="1"/>
</dbReference>
<proteinExistence type="predicted"/>
<comment type="subcellular location">
    <subcellularLocation>
        <location evidence="2">Host membrane</location>
        <topology evidence="2">Single-pass membrane protein</topology>
    </subcellularLocation>
</comment>
<organism>
    <name type="scientific">Sulfolobus islandicus rod-shaped virus 1</name>
    <name type="common">SIRV-1</name>
    <name type="synonym">Sulfolobus virus SIRV-1</name>
    <dbReference type="NCBI Taxonomy" id="157898"/>
    <lineage>
        <taxon>Viruses</taxon>
        <taxon>Adnaviria</taxon>
        <taxon>Zilligvirae</taxon>
        <taxon>Taleaviricota</taxon>
        <taxon>Tokiviricetes</taxon>
        <taxon>Ligamenvirales</taxon>
        <taxon>Rudiviridae</taxon>
        <taxon>Icerudivirus</taxon>
        <taxon>Icerudivirus SIRV1</taxon>
    </lineage>
</organism>
<gene>
    <name type="ORF">117</name>
</gene>
<keyword id="KW-1043">Host membrane</keyword>
<keyword id="KW-0472">Membrane</keyword>
<keyword id="KW-1185">Reference proteome</keyword>
<keyword id="KW-0812">Transmembrane</keyword>
<keyword id="KW-1133">Transmembrane helix</keyword>
<sequence length="117" mass="14195">MKKVLNFHFSYIYTYFITITTNYKYGDTEKIFRKFRSYIYNHDKNSHVFSIKETTKNSNGLHYHILVFTNKKLDYSRVHKHMPSHSDIRIELVPKSISDIKNVYKYMLKTKKDIKMS</sequence>
<organismHost>
    <name type="scientific">Saccharolobus islandicus</name>
    <name type="common">Sulfolobus islandicus</name>
    <dbReference type="NCBI Taxonomy" id="43080"/>
</organismHost>
<feature type="chain" id="PRO_0000342323" description="Uncharacterized protein 117">
    <location>
        <begin position="1"/>
        <end position="117"/>
    </location>
</feature>
<feature type="transmembrane region" description="Helical" evidence="1">
    <location>
        <begin position="4"/>
        <end position="26"/>
    </location>
</feature>
<accession>Q8QL45</accession>
<protein>
    <recommendedName>
        <fullName>Uncharacterized protein 117</fullName>
    </recommendedName>
</protein>
<evidence type="ECO:0000255" key="1"/>
<evidence type="ECO:0000305" key="2"/>
<name>Y117_SIRV1</name>